<organism>
    <name type="scientific">Pyrococcus furiosus (strain ATCC 43587 / DSM 3638 / JCM 8422 / Vc1)</name>
    <dbReference type="NCBI Taxonomy" id="186497"/>
    <lineage>
        <taxon>Archaea</taxon>
        <taxon>Methanobacteriati</taxon>
        <taxon>Methanobacteriota</taxon>
        <taxon>Thermococci</taxon>
        <taxon>Thermococcales</taxon>
        <taxon>Thermococcaceae</taxon>
        <taxon>Pyrococcus</taxon>
    </lineage>
</organism>
<evidence type="ECO:0000255" key="1">
    <source>
        <dbReference type="HAMAP-Rule" id="MF_00005"/>
    </source>
</evidence>
<reference key="1">
    <citation type="journal article" date="1999" name="Genetics">
        <title>Divergence of the hyperthermophilic archaea Pyrococcus furiosus and P. horikoshii inferred from complete genomic sequences.</title>
        <authorList>
            <person name="Maeder D.L."/>
            <person name="Weiss R.B."/>
            <person name="Dunn D.M."/>
            <person name="Cherry J.L."/>
            <person name="Gonzalez J.M."/>
            <person name="DiRuggiero J."/>
            <person name="Robb F.T."/>
        </authorList>
    </citation>
    <scope>NUCLEOTIDE SEQUENCE [LARGE SCALE GENOMIC DNA]</scope>
    <source>
        <strain>ATCC 43587 / DSM 3638 / JCM 8422 / Vc1</strain>
    </source>
</reference>
<keyword id="KW-0028">Amino-acid biosynthesis</keyword>
<keyword id="KW-0055">Arginine biosynthesis</keyword>
<keyword id="KW-0067">ATP-binding</keyword>
<keyword id="KW-0963">Cytoplasm</keyword>
<keyword id="KW-0436">Ligase</keyword>
<keyword id="KW-0547">Nucleotide-binding</keyword>
<keyword id="KW-1185">Reference proteome</keyword>
<accession>Q8U484</accession>
<comment type="catalytic activity">
    <reaction evidence="1">
        <text>L-citrulline + L-aspartate + ATP = 2-(N(omega)-L-arginino)succinate + AMP + diphosphate + H(+)</text>
        <dbReference type="Rhea" id="RHEA:10932"/>
        <dbReference type="ChEBI" id="CHEBI:15378"/>
        <dbReference type="ChEBI" id="CHEBI:29991"/>
        <dbReference type="ChEBI" id="CHEBI:30616"/>
        <dbReference type="ChEBI" id="CHEBI:33019"/>
        <dbReference type="ChEBI" id="CHEBI:57472"/>
        <dbReference type="ChEBI" id="CHEBI:57743"/>
        <dbReference type="ChEBI" id="CHEBI:456215"/>
        <dbReference type="EC" id="6.3.4.5"/>
    </reaction>
</comment>
<comment type="pathway">
    <text evidence="1">Amino-acid biosynthesis; L-arginine biosynthesis; L-arginine from L-ornithine and carbamoyl phosphate: step 2/3.</text>
</comment>
<comment type="subunit">
    <text evidence="1">Homotetramer.</text>
</comment>
<comment type="subcellular location">
    <subcellularLocation>
        <location evidence="1">Cytoplasm</location>
    </subcellularLocation>
</comment>
<comment type="similarity">
    <text evidence="1">Belongs to the argininosuccinate synthase family. Type 1 subfamily.</text>
</comment>
<dbReference type="EC" id="6.3.4.5" evidence="1"/>
<dbReference type="EMBL" id="AE009950">
    <property type="protein sequence ID" value="AAL80331.1"/>
    <property type="molecule type" value="Genomic_DNA"/>
</dbReference>
<dbReference type="RefSeq" id="WP_011011320.1">
    <property type="nucleotide sequence ID" value="NZ_CP023154.1"/>
</dbReference>
<dbReference type="SMR" id="Q8U484"/>
<dbReference type="STRING" id="186497.PF0207"/>
<dbReference type="PaxDb" id="186497-PF0207"/>
<dbReference type="KEGG" id="pfu:PF0207"/>
<dbReference type="PATRIC" id="fig|186497.12.peg.215"/>
<dbReference type="eggNOG" id="arCOG00112">
    <property type="taxonomic scope" value="Archaea"/>
</dbReference>
<dbReference type="HOGENOM" id="CLU_032784_4_2_2"/>
<dbReference type="OrthoDB" id="5877at2157"/>
<dbReference type="PhylomeDB" id="Q8U484"/>
<dbReference type="UniPathway" id="UPA00068">
    <property type="reaction ID" value="UER00113"/>
</dbReference>
<dbReference type="Proteomes" id="UP000001013">
    <property type="component" value="Chromosome"/>
</dbReference>
<dbReference type="GO" id="GO:0005737">
    <property type="term" value="C:cytoplasm"/>
    <property type="evidence" value="ECO:0007669"/>
    <property type="project" value="UniProtKB-SubCell"/>
</dbReference>
<dbReference type="GO" id="GO:0004055">
    <property type="term" value="F:argininosuccinate synthase activity"/>
    <property type="evidence" value="ECO:0007669"/>
    <property type="project" value="UniProtKB-UniRule"/>
</dbReference>
<dbReference type="GO" id="GO:0005524">
    <property type="term" value="F:ATP binding"/>
    <property type="evidence" value="ECO:0007669"/>
    <property type="project" value="UniProtKB-UniRule"/>
</dbReference>
<dbReference type="GO" id="GO:0000053">
    <property type="term" value="P:argininosuccinate metabolic process"/>
    <property type="evidence" value="ECO:0007669"/>
    <property type="project" value="TreeGrafter"/>
</dbReference>
<dbReference type="GO" id="GO:0006526">
    <property type="term" value="P:L-arginine biosynthetic process"/>
    <property type="evidence" value="ECO:0007669"/>
    <property type="project" value="UniProtKB-UniRule"/>
</dbReference>
<dbReference type="GO" id="GO:0000050">
    <property type="term" value="P:urea cycle"/>
    <property type="evidence" value="ECO:0007669"/>
    <property type="project" value="TreeGrafter"/>
</dbReference>
<dbReference type="CDD" id="cd01999">
    <property type="entry name" value="ASS"/>
    <property type="match status" value="1"/>
</dbReference>
<dbReference type="FunFam" id="3.40.50.620:FF:000019">
    <property type="entry name" value="Argininosuccinate synthase"/>
    <property type="match status" value="1"/>
</dbReference>
<dbReference type="FunFam" id="3.90.1260.10:FF:000007">
    <property type="entry name" value="Argininosuccinate synthase"/>
    <property type="match status" value="1"/>
</dbReference>
<dbReference type="Gene3D" id="3.90.1260.10">
    <property type="entry name" value="Argininosuccinate synthetase, chain A, domain 2"/>
    <property type="match status" value="1"/>
</dbReference>
<dbReference type="Gene3D" id="3.40.50.620">
    <property type="entry name" value="HUPs"/>
    <property type="match status" value="1"/>
</dbReference>
<dbReference type="Gene3D" id="1.20.5.470">
    <property type="entry name" value="Single helix bin"/>
    <property type="match status" value="1"/>
</dbReference>
<dbReference type="HAMAP" id="MF_00005">
    <property type="entry name" value="Arg_succ_synth_type1"/>
    <property type="match status" value="1"/>
</dbReference>
<dbReference type="InterPro" id="IPR048268">
    <property type="entry name" value="Arginosuc_syn_C"/>
</dbReference>
<dbReference type="InterPro" id="IPR048267">
    <property type="entry name" value="Arginosuc_syn_N"/>
</dbReference>
<dbReference type="InterPro" id="IPR001518">
    <property type="entry name" value="Arginosuc_synth"/>
</dbReference>
<dbReference type="InterPro" id="IPR018223">
    <property type="entry name" value="Arginosuc_synth_CS"/>
</dbReference>
<dbReference type="InterPro" id="IPR023434">
    <property type="entry name" value="Arginosuc_synth_type_1_subfam"/>
</dbReference>
<dbReference type="InterPro" id="IPR024074">
    <property type="entry name" value="AS_cat/multimer_dom_body"/>
</dbReference>
<dbReference type="InterPro" id="IPR014729">
    <property type="entry name" value="Rossmann-like_a/b/a_fold"/>
</dbReference>
<dbReference type="NCBIfam" id="TIGR00032">
    <property type="entry name" value="argG"/>
    <property type="match status" value="1"/>
</dbReference>
<dbReference type="NCBIfam" id="NF001770">
    <property type="entry name" value="PRK00509.1"/>
    <property type="match status" value="1"/>
</dbReference>
<dbReference type="NCBIfam" id="NF010392">
    <property type="entry name" value="PRK13820.1"/>
    <property type="match status" value="1"/>
</dbReference>
<dbReference type="PANTHER" id="PTHR11587">
    <property type="entry name" value="ARGININOSUCCINATE SYNTHASE"/>
    <property type="match status" value="1"/>
</dbReference>
<dbReference type="PANTHER" id="PTHR11587:SF2">
    <property type="entry name" value="ARGININOSUCCINATE SYNTHASE"/>
    <property type="match status" value="1"/>
</dbReference>
<dbReference type="Pfam" id="PF20979">
    <property type="entry name" value="Arginosuc_syn_C"/>
    <property type="match status" value="1"/>
</dbReference>
<dbReference type="Pfam" id="PF00764">
    <property type="entry name" value="Arginosuc_synth"/>
    <property type="match status" value="1"/>
</dbReference>
<dbReference type="SUPFAM" id="SSF52402">
    <property type="entry name" value="Adenine nucleotide alpha hydrolases-like"/>
    <property type="match status" value="1"/>
</dbReference>
<dbReference type="SUPFAM" id="SSF69864">
    <property type="entry name" value="Argininosuccinate synthetase, C-terminal domain"/>
    <property type="match status" value="1"/>
</dbReference>
<dbReference type="PROSITE" id="PS00564">
    <property type="entry name" value="ARGININOSUCCIN_SYN_1"/>
    <property type="match status" value="1"/>
</dbReference>
<dbReference type="PROSITE" id="PS00565">
    <property type="entry name" value="ARGININOSUCCIN_SYN_2"/>
    <property type="match status" value="1"/>
</dbReference>
<sequence length="410" mass="45973">MRIVLAYSGGLDTSVILKLMQEKLGAEVITVTVDVGQKDDFEKIEEKAYKFGAVKHYYIDAKEEFAENYVCKAIKANALYENAYPLSTALARPLIVEKLVEVAKKEGAGIIAHGCTGKGNDQVRFNLGIKALMPEAEILQPVAEWNLTRDWEMEYAKKHGIPVSDKIYSIDENIWGRSIEGGVLEDPSIEPPEEVFEWTVSIEKAPDKPEYVTIGFENGVPVSLNGEKMKLLELILKLNEIAGKHGVGRIDHIEDRSVGIKSREVYEAPAAVTLIKAHQDLEKLTLTKWVIEFKSIVDSKWSWLVYNGLWYEPLRLALEGFIDEAEKAVNGEVTVKLWKGNAIVVGRKSDNALYDVKMATYEKFSTFDQKLAKGFIELFGMQSVLAYNMLHGVHSTSNISEIKEAIKTLE</sequence>
<protein>
    <recommendedName>
        <fullName evidence="1">Argininosuccinate synthase</fullName>
        <ecNumber evidence="1">6.3.4.5</ecNumber>
    </recommendedName>
    <alternativeName>
        <fullName evidence="1">Citrulline--aspartate ligase</fullName>
    </alternativeName>
</protein>
<gene>
    <name evidence="1" type="primary">argG</name>
    <name type="ordered locus">PF0207</name>
</gene>
<name>ASSY_PYRFU</name>
<feature type="chain" id="PRO_0000148684" description="Argininosuccinate synthase">
    <location>
        <begin position="1"/>
        <end position="410"/>
    </location>
</feature>
<feature type="binding site" evidence="1">
    <location>
        <begin position="6"/>
        <end position="14"/>
    </location>
    <ligand>
        <name>ATP</name>
        <dbReference type="ChEBI" id="CHEBI:30616"/>
    </ligand>
</feature>
<feature type="binding site" evidence="1">
    <location>
        <position position="84"/>
    </location>
    <ligand>
        <name>L-citrulline</name>
        <dbReference type="ChEBI" id="CHEBI:57743"/>
    </ligand>
</feature>
<feature type="binding site" evidence="1">
    <location>
        <position position="114"/>
    </location>
    <ligand>
        <name>ATP</name>
        <dbReference type="ChEBI" id="CHEBI:30616"/>
    </ligand>
</feature>
<feature type="binding site" evidence="1">
    <location>
        <position position="116"/>
    </location>
    <ligand>
        <name>L-aspartate</name>
        <dbReference type="ChEBI" id="CHEBI:29991"/>
    </ligand>
</feature>
<feature type="binding site" evidence="1">
    <location>
        <position position="120"/>
    </location>
    <ligand>
        <name>L-aspartate</name>
        <dbReference type="ChEBI" id="CHEBI:29991"/>
    </ligand>
</feature>
<feature type="binding site" evidence="1">
    <location>
        <position position="120"/>
    </location>
    <ligand>
        <name>L-citrulline</name>
        <dbReference type="ChEBI" id="CHEBI:57743"/>
    </ligand>
</feature>
<feature type="binding site" evidence="1">
    <location>
        <position position="121"/>
    </location>
    <ligand>
        <name>L-aspartate</name>
        <dbReference type="ChEBI" id="CHEBI:29991"/>
    </ligand>
</feature>
<feature type="binding site" evidence="1">
    <location>
        <position position="124"/>
    </location>
    <ligand>
        <name>L-citrulline</name>
        <dbReference type="ChEBI" id="CHEBI:57743"/>
    </ligand>
</feature>
<feature type="binding site" evidence="1">
    <location>
        <position position="169"/>
    </location>
    <ligand>
        <name>L-citrulline</name>
        <dbReference type="ChEBI" id="CHEBI:57743"/>
    </ligand>
</feature>
<feature type="binding site" evidence="1">
    <location>
        <position position="178"/>
    </location>
    <ligand>
        <name>L-citrulline</name>
        <dbReference type="ChEBI" id="CHEBI:57743"/>
    </ligand>
</feature>
<feature type="binding site" evidence="1">
    <location>
        <position position="254"/>
    </location>
    <ligand>
        <name>L-citrulline</name>
        <dbReference type="ChEBI" id="CHEBI:57743"/>
    </ligand>
</feature>
<feature type="binding site" evidence="1">
    <location>
        <position position="266"/>
    </location>
    <ligand>
        <name>L-citrulline</name>
        <dbReference type="ChEBI" id="CHEBI:57743"/>
    </ligand>
</feature>
<proteinExistence type="inferred from homology"/>